<gene>
    <name type="primary">QCR7</name>
    <name type="synonym">CRO1</name>
    <name type="synonym">UCR7</name>
    <name type="ordered locus">YDR529C</name>
    <name type="ORF">D9719.32</name>
</gene>
<reference key="1">
    <citation type="journal article" date="1984" name="Eur. J. Biochem.">
        <title>The biosynthesis of the ubiquinol-cytochrome c reductase complex in yeast. DNA sequence analysis of the nuclear gene coding for the 14-kDa subunit.</title>
        <authorList>
            <person name="de Haan M."/>
            <person name="van Loon A.P.G.M."/>
            <person name="Kreike J."/>
            <person name="Vaessen R.T.M.J."/>
            <person name="Grivell L.A."/>
        </authorList>
    </citation>
    <scope>NUCLEOTIDE SEQUENCE [GENOMIC DNA]</scope>
    <source>
        <strain>ATCC 28383 / FL100 / VTT C-80102</strain>
    </source>
</reference>
<reference key="2">
    <citation type="journal article" date="1997" name="Nature">
        <title>The nucleotide sequence of Saccharomyces cerevisiae chromosome IV.</title>
        <authorList>
            <person name="Jacq C."/>
            <person name="Alt-Moerbe J."/>
            <person name="Andre B."/>
            <person name="Arnold W."/>
            <person name="Bahr A."/>
            <person name="Ballesta J.P.G."/>
            <person name="Bargues M."/>
            <person name="Baron L."/>
            <person name="Becker A."/>
            <person name="Biteau N."/>
            <person name="Bloecker H."/>
            <person name="Blugeon C."/>
            <person name="Boskovic J."/>
            <person name="Brandt P."/>
            <person name="Brueckner M."/>
            <person name="Buitrago M.J."/>
            <person name="Coster F."/>
            <person name="Delaveau T."/>
            <person name="del Rey F."/>
            <person name="Dujon B."/>
            <person name="Eide L.G."/>
            <person name="Garcia-Cantalejo J.M."/>
            <person name="Goffeau A."/>
            <person name="Gomez-Peris A."/>
            <person name="Granotier C."/>
            <person name="Hanemann V."/>
            <person name="Hankeln T."/>
            <person name="Hoheisel J.D."/>
            <person name="Jaeger W."/>
            <person name="Jimenez A."/>
            <person name="Jonniaux J.-L."/>
            <person name="Kraemer C."/>
            <person name="Kuester H."/>
            <person name="Laamanen P."/>
            <person name="Legros Y."/>
            <person name="Louis E.J."/>
            <person name="Moeller-Rieker S."/>
            <person name="Monnet A."/>
            <person name="Moro M."/>
            <person name="Mueller-Auer S."/>
            <person name="Nussbaumer B."/>
            <person name="Paricio N."/>
            <person name="Paulin L."/>
            <person name="Perea J."/>
            <person name="Perez-Alonso M."/>
            <person name="Perez-Ortin J.E."/>
            <person name="Pohl T.M."/>
            <person name="Prydz H."/>
            <person name="Purnelle B."/>
            <person name="Rasmussen S.W."/>
            <person name="Remacha M.A."/>
            <person name="Revuelta J.L."/>
            <person name="Rieger M."/>
            <person name="Salom D."/>
            <person name="Saluz H.P."/>
            <person name="Saiz J.E."/>
            <person name="Saren A.-M."/>
            <person name="Schaefer M."/>
            <person name="Scharfe M."/>
            <person name="Schmidt E.R."/>
            <person name="Schneider C."/>
            <person name="Scholler P."/>
            <person name="Schwarz S."/>
            <person name="Soler-Mira A."/>
            <person name="Urrestarazu L.A."/>
            <person name="Verhasselt P."/>
            <person name="Vissers S."/>
            <person name="Voet M."/>
            <person name="Volckaert G."/>
            <person name="Wagner G."/>
            <person name="Wambutt R."/>
            <person name="Wedler E."/>
            <person name="Wedler H."/>
            <person name="Woelfl S."/>
            <person name="Harris D.E."/>
            <person name="Bowman S."/>
            <person name="Brown D."/>
            <person name="Churcher C.M."/>
            <person name="Connor R."/>
            <person name="Dedman K."/>
            <person name="Gentles S."/>
            <person name="Hamlin N."/>
            <person name="Hunt S."/>
            <person name="Jones L."/>
            <person name="McDonald S."/>
            <person name="Murphy L.D."/>
            <person name="Niblett D."/>
            <person name="Odell C."/>
            <person name="Oliver K."/>
            <person name="Rajandream M.A."/>
            <person name="Richards C."/>
            <person name="Shore L."/>
            <person name="Walsh S.V."/>
            <person name="Barrell B.G."/>
            <person name="Dietrich F.S."/>
            <person name="Mulligan J.T."/>
            <person name="Allen E."/>
            <person name="Araujo R."/>
            <person name="Aviles E."/>
            <person name="Berno A."/>
            <person name="Carpenter J."/>
            <person name="Chen E."/>
            <person name="Cherry J.M."/>
            <person name="Chung E."/>
            <person name="Duncan M."/>
            <person name="Hunicke-Smith S."/>
            <person name="Hyman R.W."/>
            <person name="Komp C."/>
            <person name="Lashkari D."/>
            <person name="Lew H."/>
            <person name="Lin D."/>
            <person name="Mosedale D."/>
            <person name="Nakahara K."/>
            <person name="Namath A."/>
            <person name="Oefner P."/>
            <person name="Oh C."/>
            <person name="Petel F.X."/>
            <person name="Roberts D."/>
            <person name="Schramm S."/>
            <person name="Schroeder M."/>
            <person name="Shogren T."/>
            <person name="Shroff N."/>
            <person name="Winant A."/>
            <person name="Yelton M.A."/>
            <person name="Botstein D."/>
            <person name="Davis R.W."/>
            <person name="Johnston M."/>
            <person name="Andrews S."/>
            <person name="Brinkman R."/>
            <person name="Cooper J."/>
            <person name="Ding H."/>
            <person name="Du Z."/>
            <person name="Favello A."/>
            <person name="Fulton L."/>
            <person name="Gattung S."/>
            <person name="Greco T."/>
            <person name="Hallsworth K."/>
            <person name="Hawkins J."/>
            <person name="Hillier L.W."/>
            <person name="Jier M."/>
            <person name="Johnson D."/>
            <person name="Johnston L."/>
            <person name="Kirsten J."/>
            <person name="Kucaba T."/>
            <person name="Langston Y."/>
            <person name="Latreille P."/>
            <person name="Le T."/>
            <person name="Mardis E."/>
            <person name="Menezes S."/>
            <person name="Miller N."/>
            <person name="Nhan M."/>
            <person name="Pauley A."/>
            <person name="Peluso D."/>
            <person name="Rifkin L."/>
            <person name="Riles L."/>
            <person name="Taich A."/>
            <person name="Trevaskis E."/>
            <person name="Vignati D."/>
            <person name="Wilcox L."/>
            <person name="Wohldman P."/>
            <person name="Vaudin M."/>
            <person name="Wilson R."/>
            <person name="Waterston R."/>
            <person name="Albermann K."/>
            <person name="Hani J."/>
            <person name="Heumann K."/>
            <person name="Kleine K."/>
            <person name="Mewes H.-W."/>
            <person name="Zollner A."/>
            <person name="Zaccaria P."/>
        </authorList>
    </citation>
    <scope>NUCLEOTIDE SEQUENCE [LARGE SCALE GENOMIC DNA]</scope>
    <source>
        <strain>ATCC 204508 / S288c</strain>
    </source>
</reference>
<reference key="3">
    <citation type="journal article" date="2014" name="G3 (Bethesda)">
        <title>The reference genome sequence of Saccharomyces cerevisiae: Then and now.</title>
        <authorList>
            <person name="Engel S.R."/>
            <person name="Dietrich F.S."/>
            <person name="Fisk D.G."/>
            <person name="Binkley G."/>
            <person name="Balakrishnan R."/>
            <person name="Costanzo M.C."/>
            <person name="Dwight S.S."/>
            <person name="Hitz B.C."/>
            <person name="Karra K."/>
            <person name="Nash R.S."/>
            <person name="Weng S."/>
            <person name="Wong E.D."/>
            <person name="Lloyd P."/>
            <person name="Skrzypek M.S."/>
            <person name="Miyasato S.R."/>
            <person name="Simison M."/>
            <person name="Cherry J.M."/>
        </authorList>
    </citation>
    <scope>GENOME REANNOTATION</scope>
    <source>
        <strain>ATCC 204508 / S288c</strain>
    </source>
</reference>
<reference key="4">
    <citation type="journal article" date="2000" name="EMBO J.">
        <title>Supercomplexes in the respiratory chains of yeast and mammalian mitochondria.</title>
        <authorList>
            <person name="Schaegger H."/>
            <person name="Pfeiffer K."/>
        </authorList>
    </citation>
    <scope>FORMATION OF CYTOCHROME BC1-CYTOCHROME C OXIDASE SUPERCOMPLEX</scope>
</reference>
<reference key="5">
    <citation type="journal article" date="2000" name="J. Biol. Chem.">
        <title>The cytochrome bc1 and cytochrome c oxidase complexes associate to form a single supracomplex in yeast mitochondria.</title>
        <authorList>
            <person name="Cruciat C.M."/>
            <person name="Brunner S."/>
            <person name="Baumann F."/>
            <person name="Neupert W."/>
            <person name="Stuart R.A."/>
        </authorList>
    </citation>
    <scope>FORMATION OF CYTOCHROME BC1-CYTOCHROME C OXIDASE SUPERCOMPLEX</scope>
</reference>
<reference key="6">
    <citation type="journal article" date="2003" name="Nature">
        <title>Global analysis of protein expression in yeast.</title>
        <authorList>
            <person name="Ghaemmaghami S."/>
            <person name="Huh W.-K."/>
            <person name="Bower K."/>
            <person name="Howson R.W."/>
            <person name="Belle A."/>
            <person name="Dephoure N."/>
            <person name="O'Shea E.K."/>
            <person name="Weissman J.S."/>
        </authorList>
    </citation>
    <scope>LEVEL OF PROTEIN EXPRESSION [LARGE SCALE ANALYSIS]</scope>
</reference>
<reference key="7">
    <citation type="journal article" date="2012" name="Proc. Natl. Acad. Sci. U.S.A.">
        <title>N-terminal acetylome analyses and functional insights of the N-terminal acetyltransferase NatB.</title>
        <authorList>
            <person name="Van Damme P."/>
            <person name="Lasa M."/>
            <person name="Polevoda B."/>
            <person name="Gazquez C."/>
            <person name="Elosegui-Artola A."/>
            <person name="Kim D.S."/>
            <person name="De Juan-Pardo E."/>
            <person name="Demeyer K."/>
            <person name="Hole K."/>
            <person name="Larrea E."/>
            <person name="Timmerman E."/>
            <person name="Prieto J."/>
            <person name="Arnesen T."/>
            <person name="Sherman F."/>
            <person name="Gevaert K."/>
            <person name="Aldabe R."/>
        </authorList>
    </citation>
    <scope>IDENTIFICATION BY MASS SPECTROMETRY [LARGE SCALE ANALYSIS]</scope>
</reference>
<reference key="8">
    <citation type="journal article" date="2000" name="Structure">
        <title>Structure at 2.3 A resolution of the cytochrome bc1 complex from the yeast Saccharomyces cerevisiae co-crystallized with an antibody Fv fragment.</title>
        <authorList>
            <person name="Hunte C."/>
            <person name="Koepke J."/>
            <person name="Lange C."/>
            <person name="Rossmanith T."/>
            <person name="Michel H."/>
        </authorList>
    </citation>
    <scope>X-RAY CRYSTALLOGRAPHY (2.3 ANGSTROMS) OF 3-127</scope>
</reference>
<reference key="9">
    <citation type="journal article" date="2002" name="Proc. Natl. Acad. Sci. U.S.A.">
        <title>Crystal structure of the yeast cytochrome bc1 complex with its bound substrate cytochrome c.</title>
        <authorList>
            <person name="Lange C."/>
            <person name="Hunte C."/>
        </authorList>
    </citation>
    <scope>X-RAY CRYSTALLOGRAPHY (2.97 ANGSTROMS) OF 2-127</scope>
</reference>
<reference key="10">
    <citation type="journal article" date="2003" name="J. Biol. Chem.">
        <title>Structure of the yeast cytochrome bc1 complex with a hydroxyquinone anion Qo site inhibitor bound.</title>
        <authorList>
            <person name="Palsdottir H."/>
            <person name="Lojero C.G."/>
            <person name="Trumpower B.L."/>
            <person name="Hunte C."/>
        </authorList>
    </citation>
    <scope>X-RAY CRYSTALLOGRAPHY (2.5 ANGSTROMS) OF 3-127</scope>
</reference>
<reference key="11">
    <citation type="journal article" date="2008" name="J. Biol. Chem.">
        <title>Structure of complex III with bound cytochrome c in reduced state and definition of a minimal core interface for electron transfer.</title>
        <authorList>
            <person name="Solmaz S.R."/>
            <person name="Hunte C."/>
        </authorList>
    </citation>
    <scope>X-RAY CRYSTALLOGRAPHY (1.90 ANGSTROMS) OF 2-127</scope>
</reference>
<reference key="12">
    <citation type="journal article" date="2019" name="Nat. Struct. Mol. Biol.">
        <title>Cryo-EM structure of the yeast respiratory supercomplex.</title>
        <authorList>
            <person name="Rathore S."/>
            <person name="Berndtsson J."/>
            <person name="Marin-Buera L."/>
            <person name="Conrad J."/>
            <person name="Carroni M."/>
            <person name="Brzezinski P."/>
            <person name="Ott M."/>
        </authorList>
    </citation>
    <scope>STRUCTURE BY ELECTRON MICROSCOPY (3.23 ANGSTROMS)</scope>
</reference>
<reference key="13">
    <citation type="journal article" date="2019" name="Nat. Struct. Mol. Biol.">
        <title>Structure of yeast cytochrome c oxidase in a supercomplex with cytochrome bc1.</title>
        <authorList>
            <person name="Hartley A.M."/>
            <person name="Lukoyanova N."/>
            <person name="Zhang Y."/>
            <person name="Cabrera-Orefice A."/>
            <person name="Arnold S."/>
            <person name="Meunier B."/>
            <person name="Pinotsis N."/>
            <person name="Marechal A."/>
        </authorList>
    </citation>
    <scope>STRUCTURE BY ELECTRON MICROSCOPY (3.35 ANGSTROMS)</scope>
</reference>
<keyword id="KW-0002">3D-structure</keyword>
<keyword id="KW-0249">Electron transport</keyword>
<keyword id="KW-0472">Membrane</keyword>
<keyword id="KW-0496">Mitochondrion</keyword>
<keyword id="KW-0999">Mitochondrion inner membrane</keyword>
<keyword id="KW-1185">Reference proteome</keyword>
<keyword id="KW-0679">Respiratory chain</keyword>
<keyword id="KW-0813">Transport</keyword>
<name>QCR7_YEAST</name>
<accession>P00128</accession>
<accession>D6VTF0</accession>
<evidence type="ECO:0000269" key="1">
    <source>
    </source>
</evidence>
<evidence type="ECO:0000269" key="2">
    <source>
    </source>
</evidence>
<evidence type="ECO:0000269" key="3">
    <source>
    </source>
</evidence>
<evidence type="ECO:0000269" key="4">
    <source>
    </source>
</evidence>
<evidence type="ECO:0000269" key="5">
    <source>
    </source>
</evidence>
<evidence type="ECO:0000269" key="6">
    <source>
    </source>
</evidence>
<evidence type="ECO:0000269" key="7">
    <source>
    </source>
</evidence>
<evidence type="ECO:0000269" key="8">
    <source>
    </source>
</evidence>
<evidence type="ECO:0000305" key="9"/>
<evidence type="ECO:0000305" key="10">
    <source>
    </source>
</evidence>
<evidence type="ECO:0007829" key="11">
    <source>
        <dbReference type="PDB" id="3CX5"/>
    </source>
</evidence>
<evidence type="ECO:0007829" key="12">
    <source>
        <dbReference type="PDB" id="9ETZ"/>
    </source>
</evidence>
<comment type="function">
    <text evidence="10">Component of the ubiquinol-cytochrome c oxidoreductase, a multisubunit transmembrane complex that is part of the mitochondrial electron transport chain which drives oxidative phosphorylation. The respiratory chain contains 3 multisubunit complexes succinate dehydrogenase (complex II, CII), ubiquinol-cytochrome c oxidoreductase (cytochrome b-c1 complex, complex III, CIII) and cytochrome c oxidase (complex IV, CIV), that cooperate to transfer electrons derived from NADH and succinate to molecular oxygen, creating an electrochemical gradient over the inner membrane that drives transmembrane transport and the ATP synthase. The cytochrome b-c1 complex catalyzes electron transfer from ubiquinol to cytochrome c, linking this redox reaction to translocation of protons across the mitochondrial inner membrane, with protons being carried across the membrane as hydrogens on the quinol. In the process called Q cycle, 2 protons are consumed from the matrix, 4 protons are released into the intermembrane space and 2 electrons are passed to cytochrome c.</text>
</comment>
<comment type="subunit">
    <text evidence="1 2 3 4 6 7 8">Component of the ubiquinol-cytochrome c oxidoreductase (cytochrome b-c1 complex, complex III, CIII), a multisubunit enzyme composed of 10 subunits. The complex is composed of 3 respiratory subunits cytochrome b (COB), cytochrome c1 (CYT1) and Rieske protein (RIP1), 2 core protein subunits COR1 and QCR2, and 5 low-molecular weight protein subunits QCR6, QCR7, QCR8, QCR9 and QCR10 (PubMed:10873857, PubMed:11880631, PubMed:18390544, PubMed:30598554). The complex exists as an obligatory dimer and forms supercomplexes (SCs) in the inner mitochondrial membrane with a monomer or a dimer of cytochrome c oxidase (complex IV, CIV), resulting in 2 different assemblies (supercomplexes III(2)IV and III(2)IV(2)) (PubMed:10764779, PubMed:10775262, PubMed:30598554, PubMed:30598556).</text>
</comment>
<comment type="subcellular location">
    <subcellularLocation>
        <location evidence="6 7">Mitochondrion inner membrane</location>
        <topology evidence="6 7">Peripheral membrane protein</topology>
        <orientation evidence="6 7">Matrix side</orientation>
    </subcellularLocation>
</comment>
<comment type="miscellaneous">
    <text evidence="5">Present with 10100 molecules/cell in log phase SD medium.</text>
</comment>
<comment type="similarity">
    <text evidence="9">Belongs to the UQCRB/QCR7 family.</text>
</comment>
<comment type="caution">
    <text evidence="9">Was originally thought to be the ubiquinone-binding protein (QP-C).</text>
</comment>
<proteinExistence type="evidence at protein level"/>
<sequence>MPQSFTSIARIGDYILKSPVLSKLCVPVANQFINLAGYKKLGLKFDDLIAEENPIMQTALRRLPEDESYARAYRIIRAHQTELTHHLLPRNEWIKAQEDVPYLLPYILEAEAAAKEKDELDNIEVSK</sequence>
<protein>
    <recommendedName>
        <fullName>Cytochrome b-c1 complex subunit 7, mitochondrial</fullName>
    </recommendedName>
    <alternativeName>
        <fullName>Complex III subunit 7</fullName>
    </alternativeName>
    <alternativeName>
        <fullName>Complex III subunit VII</fullName>
    </alternativeName>
    <alternativeName>
        <fullName>Ubiquinol-cytochrome c oxidoreductase subunit 7</fullName>
    </alternativeName>
    <alternativeName>
        <fullName>Ubiquinol-cytochrome c reductase 14 kDa protein</fullName>
    </alternativeName>
</protein>
<feature type="chain" id="PRO_0000193539" description="Cytochrome b-c1 complex subunit 7, mitochondrial">
    <location>
        <begin position="1"/>
        <end position="127"/>
    </location>
</feature>
<feature type="sequence conflict" description="In Ref. 1; CAA25064." evidence="9" ref="1">
    <original>E</original>
    <variation>Q</variation>
    <location>
        <position position="92"/>
    </location>
</feature>
<feature type="helix" evidence="11">
    <location>
        <begin position="5"/>
        <end position="17"/>
    </location>
</feature>
<feature type="helix" evidence="11">
    <location>
        <begin position="19"/>
        <end position="36"/>
    </location>
</feature>
<feature type="helix" evidence="11">
    <location>
        <begin position="38"/>
        <end position="41"/>
    </location>
</feature>
<feature type="helix" evidence="11">
    <location>
        <begin position="45"/>
        <end position="48"/>
    </location>
</feature>
<feature type="helix" evidence="11">
    <location>
        <begin position="54"/>
        <end position="62"/>
    </location>
</feature>
<feature type="helix" evidence="11">
    <location>
        <begin position="65"/>
        <end position="83"/>
    </location>
</feature>
<feature type="helix" evidence="11">
    <location>
        <begin position="90"/>
        <end position="92"/>
    </location>
</feature>
<feature type="helix" evidence="11">
    <location>
        <begin position="96"/>
        <end position="98"/>
    </location>
</feature>
<feature type="helix" evidence="11">
    <location>
        <begin position="104"/>
        <end position="121"/>
    </location>
</feature>
<feature type="strand" evidence="12">
    <location>
        <begin position="123"/>
        <end position="125"/>
    </location>
</feature>
<dbReference type="EMBL" id="X00256">
    <property type="protein sequence ID" value="CAA25064.1"/>
    <property type="molecule type" value="Genomic_DNA"/>
</dbReference>
<dbReference type="EMBL" id="U33057">
    <property type="protein sequence ID" value="AAB64968.1"/>
    <property type="molecule type" value="Genomic_DNA"/>
</dbReference>
<dbReference type="EMBL" id="BK006938">
    <property type="protein sequence ID" value="DAA12360.1"/>
    <property type="molecule type" value="Genomic_DNA"/>
</dbReference>
<dbReference type="PIR" id="S69584">
    <property type="entry name" value="RDBYUN"/>
</dbReference>
<dbReference type="RefSeq" id="NP_010818.1">
    <property type="nucleotide sequence ID" value="NM_001180837.1"/>
</dbReference>
<dbReference type="PDB" id="1EZV">
    <property type="method" value="X-ray"/>
    <property type="resolution" value="2.30 A"/>
    <property type="chains" value="F=3-127"/>
</dbReference>
<dbReference type="PDB" id="1KB9">
    <property type="method" value="X-ray"/>
    <property type="resolution" value="2.30 A"/>
    <property type="chains" value="G=3-127"/>
</dbReference>
<dbReference type="PDB" id="1KYO">
    <property type="method" value="X-ray"/>
    <property type="resolution" value="2.97 A"/>
    <property type="chains" value="G/R=2-127"/>
</dbReference>
<dbReference type="PDB" id="1P84">
    <property type="method" value="X-ray"/>
    <property type="resolution" value="2.50 A"/>
    <property type="chains" value="G=3-127"/>
</dbReference>
<dbReference type="PDB" id="2IBZ">
    <property type="method" value="X-ray"/>
    <property type="resolution" value="2.30 A"/>
    <property type="chains" value="F=1-127"/>
</dbReference>
<dbReference type="PDB" id="3CX5">
    <property type="method" value="X-ray"/>
    <property type="resolution" value="1.90 A"/>
    <property type="chains" value="G/R=2-127"/>
</dbReference>
<dbReference type="PDB" id="3CXH">
    <property type="method" value="X-ray"/>
    <property type="resolution" value="2.50 A"/>
    <property type="chains" value="G/R=2-127"/>
</dbReference>
<dbReference type="PDB" id="4PD4">
    <property type="method" value="X-ray"/>
    <property type="resolution" value="3.04 A"/>
    <property type="chains" value="G=2-127"/>
</dbReference>
<dbReference type="PDB" id="6GIQ">
    <property type="method" value="EM"/>
    <property type="resolution" value="3.23 A"/>
    <property type="chains" value="G/R=1-127"/>
</dbReference>
<dbReference type="PDB" id="6HU9">
    <property type="method" value="EM"/>
    <property type="resolution" value="3.35 A"/>
    <property type="chains" value="G/R=1-127"/>
</dbReference>
<dbReference type="PDB" id="6T0B">
    <property type="method" value="EM"/>
    <property type="resolution" value="2.80 A"/>
    <property type="chains" value="G/R=1-127"/>
</dbReference>
<dbReference type="PDB" id="6T15">
    <property type="method" value="EM"/>
    <property type="resolution" value="3.29 A"/>
    <property type="chains" value="G/R=1-127"/>
</dbReference>
<dbReference type="PDB" id="6YMX">
    <property type="method" value="EM"/>
    <property type="resolution" value="3.17 A"/>
    <property type="chains" value="G/R=2-127"/>
</dbReference>
<dbReference type="PDB" id="8E7S">
    <property type="method" value="EM"/>
    <property type="resolution" value="3.20 A"/>
    <property type="chains" value="F/f=1-127"/>
</dbReference>
<dbReference type="PDB" id="8EC0">
    <property type="method" value="EM"/>
    <property type="resolution" value="3.30 A"/>
    <property type="chains" value="F/f=1-127"/>
</dbReference>
<dbReference type="PDB" id="8YHQ">
    <property type="method" value="EM"/>
    <property type="resolution" value="2.42 A"/>
    <property type="chains" value="G/P=2-127"/>
</dbReference>
<dbReference type="PDB" id="8YIN">
    <property type="method" value="EM"/>
    <property type="resolution" value="2.74 A"/>
    <property type="chains" value="G/R=2-127"/>
</dbReference>
<dbReference type="PDB" id="8ZMT">
    <property type="method" value="EM"/>
    <property type="resolution" value="2.52 A"/>
    <property type="chains" value="G/R=2-127"/>
</dbReference>
<dbReference type="PDB" id="9ETZ">
    <property type="method" value="EM"/>
    <property type="resolution" value="2.40 A"/>
    <property type="chains" value="G/R=2-127"/>
</dbReference>
<dbReference type="PDBsum" id="1EZV"/>
<dbReference type="PDBsum" id="1KB9"/>
<dbReference type="PDBsum" id="1KYO"/>
<dbReference type="PDBsum" id="1P84"/>
<dbReference type="PDBsum" id="2IBZ"/>
<dbReference type="PDBsum" id="3CX5"/>
<dbReference type="PDBsum" id="3CXH"/>
<dbReference type="PDBsum" id="4PD4"/>
<dbReference type="PDBsum" id="6GIQ"/>
<dbReference type="PDBsum" id="6HU9"/>
<dbReference type="PDBsum" id="6T0B"/>
<dbReference type="PDBsum" id="6T15"/>
<dbReference type="PDBsum" id="6YMX"/>
<dbReference type="PDBsum" id="8E7S"/>
<dbReference type="PDBsum" id="8EC0"/>
<dbReference type="PDBsum" id="8YHQ"/>
<dbReference type="PDBsum" id="8YIN"/>
<dbReference type="PDBsum" id="8ZMT"/>
<dbReference type="PDBsum" id="9ETZ"/>
<dbReference type="EMDB" id="EMD-0262"/>
<dbReference type="EMDB" id="EMD-10317"/>
<dbReference type="EMDB" id="EMD-10340"/>
<dbReference type="EMDB" id="EMD-10847"/>
<dbReference type="EMDB" id="EMD-19963"/>
<dbReference type="EMDB" id="EMD-27940"/>
<dbReference type="EMDB" id="EMD-28011"/>
<dbReference type="SMR" id="P00128"/>
<dbReference type="BioGRID" id="32578">
    <property type="interactions" value="183"/>
</dbReference>
<dbReference type="ComplexPortal" id="CPX-567">
    <property type="entry name" value="Mitochondrial respiratory chain complex III"/>
</dbReference>
<dbReference type="DIP" id="DIP-2061N"/>
<dbReference type="FunCoup" id="P00128">
    <property type="interactions" value="279"/>
</dbReference>
<dbReference type="IntAct" id="P00128">
    <property type="interactions" value="41"/>
</dbReference>
<dbReference type="STRING" id="4932.YDR529C"/>
<dbReference type="PaxDb" id="4932-YDR529C"/>
<dbReference type="PeptideAtlas" id="P00128"/>
<dbReference type="EnsemblFungi" id="YDR529C_mRNA">
    <property type="protein sequence ID" value="YDR529C"/>
    <property type="gene ID" value="YDR529C"/>
</dbReference>
<dbReference type="GeneID" id="852142"/>
<dbReference type="KEGG" id="sce:YDR529C"/>
<dbReference type="AGR" id="SGD:S000002937"/>
<dbReference type="SGD" id="S000002937">
    <property type="gene designation" value="QCR7"/>
</dbReference>
<dbReference type="VEuPathDB" id="FungiDB:YDR529C"/>
<dbReference type="eggNOG" id="KOG3440">
    <property type="taxonomic scope" value="Eukaryota"/>
</dbReference>
<dbReference type="GeneTree" id="ENSGT00390000012916"/>
<dbReference type="HOGENOM" id="CLU_115154_1_0_1"/>
<dbReference type="InParanoid" id="P00128"/>
<dbReference type="OMA" id="PLAQWYT"/>
<dbReference type="OrthoDB" id="425749at2759"/>
<dbReference type="BioCyc" id="MetaCyc:YDR529C-MONOMER"/>
<dbReference type="BioCyc" id="YEAST:YDR529C-MONOMER"/>
<dbReference type="Reactome" id="R-SCE-611105">
    <property type="pathway name" value="Respiratory electron transport"/>
</dbReference>
<dbReference type="Reactome" id="R-SCE-9865878">
    <property type="pathway name" value="Complex III assembly"/>
</dbReference>
<dbReference type="BioGRID-ORCS" id="852142">
    <property type="hits" value="5 hits in 10 CRISPR screens"/>
</dbReference>
<dbReference type="EvolutionaryTrace" id="P00128"/>
<dbReference type="PRO" id="PR:P00128"/>
<dbReference type="Proteomes" id="UP000002311">
    <property type="component" value="Chromosome IV"/>
</dbReference>
<dbReference type="RNAct" id="P00128">
    <property type="molecule type" value="protein"/>
</dbReference>
<dbReference type="GO" id="GO:0099617">
    <property type="term" value="C:matrix side of mitochondrial inner membrane"/>
    <property type="evidence" value="ECO:0000314"/>
    <property type="project" value="UniProtKB"/>
</dbReference>
<dbReference type="GO" id="GO:0005743">
    <property type="term" value="C:mitochondrial inner membrane"/>
    <property type="evidence" value="ECO:0000314"/>
    <property type="project" value="ComplexPortal"/>
</dbReference>
<dbReference type="GO" id="GO:0005739">
    <property type="term" value="C:mitochondrion"/>
    <property type="evidence" value="ECO:0007005"/>
    <property type="project" value="SGD"/>
</dbReference>
<dbReference type="GO" id="GO:0045275">
    <property type="term" value="C:respiratory chain complex III"/>
    <property type="evidence" value="ECO:0000314"/>
    <property type="project" value="SGD"/>
</dbReference>
<dbReference type="GO" id="GO:0009060">
    <property type="term" value="P:aerobic respiration"/>
    <property type="evidence" value="ECO:0000315"/>
    <property type="project" value="SGD"/>
</dbReference>
<dbReference type="GO" id="GO:0045333">
    <property type="term" value="P:cellular respiration"/>
    <property type="evidence" value="ECO:0000314"/>
    <property type="project" value="ComplexPortal"/>
</dbReference>
<dbReference type="GO" id="GO:0006122">
    <property type="term" value="P:mitochondrial electron transport, ubiquinol to cytochrome c"/>
    <property type="evidence" value="ECO:0000314"/>
    <property type="project" value="ComplexPortal"/>
</dbReference>
<dbReference type="GO" id="GO:0034551">
    <property type="term" value="P:mitochondrial respiratory chain complex III assembly"/>
    <property type="evidence" value="ECO:0000315"/>
    <property type="project" value="SGD"/>
</dbReference>
<dbReference type="GO" id="GO:1902600">
    <property type="term" value="P:proton transmembrane transport"/>
    <property type="evidence" value="ECO:0007669"/>
    <property type="project" value="GOC"/>
</dbReference>
<dbReference type="FunFam" id="1.10.1090.10:FF:000001">
    <property type="entry name" value="Cytochrome b-c1 complex subunit 7"/>
    <property type="match status" value="1"/>
</dbReference>
<dbReference type="Gene3D" id="1.10.1090.10">
    <property type="entry name" value="Cytochrome b-c1 complex subunit 7"/>
    <property type="match status" value="1"/>
</dbReference>
<dbReference type="InterPro" id="IPR003197">
    <property type="entry name" value="QCR7"/>
</dbReference>
<dbReference type="InterPro" id="IPR036544">
    <property type="entry name" value="QCR7_sf"/>
</dbReference>
<dbReference type="PANTHER" id="PTHR12022:SF0">
    <property type="entry name" value="CYTOCHROME B-C1 COMPLEX SUBUNIT 7"/>
    <property type="match status" value="1"/>
</dbReference>
<dbReference type="PANTHER" id="PTHR12022">
    <property type="entry name" value="UBIQUINOL-CYTOCHROME C REDUCTASE COMPLEX 14 KD PROTEIN"/>
    <property type="match status" value="1"/>
</dbReference>
<dbReference type="Pfam" id="PF02271">
    <property type="entry name" value="UCR_14kD"/>
    <property type="match status" value="1"/>
</dbReference>
<dbReference type="PIRSF" id="PIRSF000022">
    <property type="entry name" value="Bc1_14K"/>
    <property type="match status" value="1"/>
</dbReference>
<dbReference type="SUPFAM" id="SSF81524">
    <property type="entry name" value="14 kDa protein of cytochrome bc1 complex (Ubiquinol-cytochrome c reductase)"/>
    <property type="match status" value="1"/>
</dbReference>
<organism>
    <name type="scientific">Saccharomyces cerevisiae (strain ATCC 204508 / S288c)</name>
    <name type="common">Baker's yeast</name>
    <dbReference type="NCBI Taxonomy" id="559292"/>
    <lineage>
        <taxon>Eukaryota</taxon>
        <taxon>Fungi</taxon>
        <taxon>Dikarya</taxon>
        <taxon>Ascomycota</taxon>
        <taxon>Saccharomycotina</taxon>
        <taxon>Saccharomycetes</taxon>
        <taxon>Saccharomycetales</taxon>
        <taxon>Saccharomycetaceae</taxon>
        <taxon>Saccharomyces</taxon>
    </lineage>
</organism>